<evidence type="ECO:0000255" key="1">
    <source>
        <dbReference type="HAMAP-Rule" id="MF_00823"/>
    </source>
</evidence>
<evidence type="ECO:0000255" key="2">
    <source>
        <dbReference type="PROSITE-ProRule" id="PRU01137"/>
    </source>
</evidence>
<organism>
    <name type="scientific">Staphylococcus aureus (strain JH1)</name>
    <dbReference type="NCBI Taxonomy" id="359787"/>
    <lineage>
        <taxon>Bacteria</taxon>
        <taxon>Bacillati</taxon>
        <taxon>Bacillota</taxon>
        <taxon>Bacilli</taxon>
        <taxon>Bacillales</taxon>
        <taxon>Staphylococcaceae</taxon>
        <taxon>Staphylococcus</taxon>
    </lineage>
</organism>
<gene>
    <name evidence="1" type="primary">accA</name>
    <name type="ordered locus">SaurJH1_1790</name>
</gene>
<accession>A6U2G6</accession>
<feature type="chain" id="PRO_1000083936" description="Acetyl-coenzyme A carboxylase carboxyl transferase subunit alpha">
    <location>
        <begin position="1"/>
        <end position="314"/>
    </location>
</feature>
<feature type="domain" description="CoA carboxyltransferase C-terminal" evidence="2">
    <location>
        <begin position="32"/>
        <end position="289"/>
    </location>
</feature>
<comment type="function">
    <text evidence="1">Component of the acetyl coenzyme A carboxylase (ACC) complex. First, biotin carboxylase catalyzes the carboxylation of biotin on its carrier protein (BCCP) and then the CO(2) group is transferred by the carboxyltransferase to acetyl-CoA to form malonyl-CoA.</text>
</comment>
<comment type="catalytic activity">
    <reaction evidence="1">
        <text>N(6)-carboxybiotinyl-L-lysyl-[protein] + acetyl-CoA = N(6)-biotinyl-L-lysyl-[protein] + malonyl-CoA</text>
        <dbReference type="Rhea" id="RHEA:54728"/>
        <dbReference type="Rhea" id="RHEA-COMP:10505"/>
        <dbReference type="Rhea" id="RHEA-COMP:10506"/>
        <dbReference type="ChEBI" id="CHEBI:57288"/>
        <dbReference type="ChEBI" id="CHEBI:57384"/>
        <dbReference type="ChEBI" id="CHEBI:83144"/>
        <dbReference type="ChEBI" id="CHEBI:83145"/>
        <dbReference type="EC" id="2.1.3.15"/>
    </reaction>
</comment>
<comment type="pathway">
    <text evidence="1">Lipid metabolism; malonyl-CoA biosynthesis; malonyl-CoA from acetyl-CoA: step 1/1.</text>
</comment>
<comment type="subunit">
    <text evidence="1">Acetyl-CoA carboxylase is a heterohexamer composed of biotin carboxyl carrier protein (AccB), biotin carboxylase (AccC) and two subunits each of ACCase subunit alpha (AccA) and ACCase subunit beta (AccD).</text>
</comment>
<comment type="subcellular location">
    <subcellularLocation>
        <location evidence="1">Cytoplasm</location>
    </subcellularLocation>
</comment>
<comment type="similarity">
    <text evidence="1">Belongs to the AccA family.</text>
</comment>
<keyword id="KW-0067">ATP-binding</keyword>
<keyword id="KW-0963">Cytoplasm</keyword>
<keyword id="KW-0275">Fatty acid biosynthesis</keyword>
<keyword id="KW-0276">Fatty acid metabolism</keyword>
<keyword id="KW-0444">Lipid biosynthesis</keyword>
<keyword id="KW-0443">Lipid metabolism</keyword>
<keyword id="KW-0547">Nucleotide-binding</keyword>
<keyword id="KW-0808">Transferase</keyword>
<sequence length="314" mass="35056">MLDFEKPLFEIRNKIESLKESQDKNDVDLQEEIDMLEASLERETKKIYTNLKPWDRVQIARLQERPTTLDYIPYIFDSFMELHGDRNFRDDPAMIGGIGFLNGRAVTVIGQQRGKDTKDNIYRNFGMAHPEGYRKALRLMKQAEKFNRPIFTFIDTKGAYPGKAAEERGQSESIATNLIEMASLKVPVIAIVIGEGGSGGALGIGIANKVLMLENSTYSVISPEGAAALLWKDSNLAKIAAETMKITAHDIKQLGIIDDVISEPLGGAHKDVEQQALAIKSAFVAQLDSLESLSRDEIANDRFEKFRNIGSYIE</sequence>
<reference key="1">
    <citation type="submission" date="2007-06" db="EMBL/GenBank/DDBJ databases">
        <title>Complete sequence of chromosome of Staphylococcus aureus subsp. aureus JH1.</title>
        <authorList>
            <consortium name="US DOE Joint Genome Institute"/>
            <person name="Copeland A."/>
            <person name="Lucas S."/>
            <person name="Lapidus A."/>
            <person name="Barry K."/>
            <person name="Detter J.C."/>
            <person name="Glavina del Rio T."/>
            <person name="Hammon N."/>
            <person name="Israni S."/>
            <person name="Dalin E."/>
            <person name="Tice H."/>
            <person name="Pitluck S."/>
            <person name="Chain P."/>
            <person name="Malfatti S."/>
            <person name="Shin M."/>
            <person name="Vergez L."/>
            <person name="Schmutz J."/>
            <person name="Larimer F."/>
            <person name="Land M."/>
            <person name="Hauser L."/>
            <person name="Kyrpides N."/>
            <person name="Ivanova N."/>
            <person name="Tomasz A."/>
            <person name="Richardson P."/>
        </authorList>
    </citation>
    <scope>NUCLEOTIDE SEQUENCE [LARGE SCALE GENOMIC DNA]</scope>
    <source>
        <strain>JH1</strain>
    </source>
</reference>
<protein>
    <recommendedName>
        <fullName evidence="1">Acetyl-coenzyme A carboxylase carboxyl transferase subunit alpha</fullName>
        <shortName evidence="1">ACCase subunit alpha</shortName>
        <shortName evidence="1">Acetyl-CoA carboxylase carboxyltransferase subunit alpha</shortName>
        <ecNumber evidence="1">2.1.3.15</ecNumber>
    </recommendedName>
</protein>
<proteinExistence type="inferred from homology"/>
<name>ACCA_STAA2</name>
<dbReference type="EC" id="2.1.3.15" evidence="1"/>
<dbReference type="EMBL" id="CP000736">
    <property type="protein sequence ID" value="ABR52634.1"/>
    <property type="molecule type" value="Genomic_DNA"/>
</dbReference>
<dbReference type="SMR" id="A6U2G6"/>
<dbReference type="KEGG" id="sah:SaurJH1_1790"/>
<dbReference type="HOGENOM" id="CLU_015486_0_2_9"/>
<dbReference type="UniPathway" id="UPA00655">
    <property type="reaction ID" value="UER00711"/>
</dbReference>
<dbReference type="GO" id="GO:0009317">
    <property type="term" value="C:acetyl-CoA carboxylase complex"/>
    <property type="evidence" value="ECO:0007669"/>
    <property type="project" value="InterPro"/>
</dbReference>
<dbReference type="GO" id="GO:0003989">
    <property type="term" value="F:acetyl-CoA carboxylase activity"/>
    <property type="evidence" value="ECO:0007669"/>
    <property type="project" value="InterPro"/>
</dbReference>
<dbReference type="GO" id="GO:0005524">
    <property type="term" value="F:ATP binding"/>
    <property type="evidence" value="ECO:0007669"/>
    <property type="project" value="UniProtKB-KW"/>
</dbReference>
<dbReference type="GO" id="GO:0016743">
    <property type="term" value="F:carboxyl- or carbamoyltransferase activity"/>
    <property type="evidence" value="ECO:0007669"/>
    <property type="project" value="UniProtKB-UniRule"/>
</dbReference>
<dbReference type="GO" id="GO:0006633">
    <property type="term" value="P:fatty acid biosynthetic process"/>
    <property type="evidence" value="ECO:0007669"/>
    <property type="project" value="UniProtKB-KW"/>
</dbReference>
<dbReference type="GO" id="GO:2001295">
    <property type="term" value="P:malonyl-CoA biosynthetic process"/>
    <property type="evidence" value="ECO:0007669"/>
    <property type="project" value="UniProtKB-UniRule"/>
</dbReference>
<dbReference type="Gene3D" id="3.90.226.10">
    <property type="entry name" value="2-enoyl-CoA Hydratase, Chain A, domain 1"/>
    <property type="match status" value="1"/>
</dbReference>
<dbReference type="HAMAP" id="MF_00823">
    <property type="entry name" value="AcetylCoA_CT_alpha"/>
    <property type="match status" value="1"/>
</dbReference>
<dbReference type="InterPro" id="IPR001095">
    <property type="entry name" value="Acetyl_CoA_COase_a_su"/>
</dbReference>
<dbReference type="InterPro" id="IPR029045">
    <property type="entry name" value="ClpP/crotonase-like_dom_sf"/>
</dbReference>
<dbReference type="InterPro" id="IPR011763">
    <property type="entry name" value="COA_CT_C"/>
</dbReference>
<dbReference type="NCBIfam" id="TIGR00513">
    <property type="entry name" value="accA"/>
    <property type="match status" value="1"/>
</dbReference>
<dbReference type="NCBIfam" id="NF041504">
    <property type="entry name" value="AccA_sub"/>
    <property type="match status" value="1"/>
</dbReference>
<dbReference type="NCBIfam" id="NF004344">
    <property type="entry name" value="PRK05724.1"/>
    <property type="match status" value="1"/>
</dbReference>
<dbReference type="PANTHER" id="PTHR42853">
    <property type="entry name" value="ACETYL-COENZYME A CARBOXYLASE CARBOXYL TRANSFERASE SUBUNIT ALPHA"/>
    <property type="match status" value="1"/>
</dbReference>
<dbReference type="PANTHER" id="PTHR42853:SF3">
    <property type="entry name" value="ACETYL-COENZYME A CARBOXYLASE CARBOXYL TRANSFERASE SUBUNIT ALPHA, CHLOROPLASTIC"/>
    <property type="match status" value="1"/>
</dbReference>
<dbReference type="Pfam" id="PF03255">
    <property type="entry name" value="ACCA"/>
    <property type="match status" value="1"/>
</dbReference>
<dbReference type="PRINTS" id="PR01069">
    <property type="entry name" value="ACCCTRFRASEA"/>
</dbReference>
<dbReference type="SUPFAM" id="SSF52096">
    <property type="entry name" value="ClpP/crotonase"/>
    <property type="match status" value="1"/>
</dbReference>
<dbReference type="PROSITE" id="PS50989">
    <property type="entry name" value="COA_CT_CTER"/>
    <property type="match status" value="1"/>
</dbReference>